<sequence length="116" mass="13452">MRIFLDANVIADWILLKNKNQDASDPLLTERYRHMAESFKLVEEILKLKEKVSGTSQMAIAEVFGVIYDDAINMKLFREAVPASSWYWFSIRERKALSEDSQQLFLMEPHTSPQGI</sequence>
<protein>
    <recommendedName>
        <fullName>Uncharacterized protein AF_0162</fullName>
    </recommendedName>
</protein>
<proteinExistence type="predicted"/>
<keyword id="KW-1185">Reference proteome</keyword>
<name>Y162_ARCFU</name>
<organism>
    <name type="scientific">Archaeoglobus fulgidus (strain ATCC 49558 / DSM 4304 / JCM 9628 / NBRC 100126 / VC-16)</name>
    <dbReference type="NCBI Taxonomy" id="224325"/>
    <lineage>
        <taxon>Archaea</taxon>
        <taxon>Methanobacteriati</taxon>
        <taxon>Methanobacteriota</taxon>
        <taxon>Archaeoglobi</taxon>
        <taxon>Archaeoglobales</taxon>
        <taxon>Archaeoglobaceae</taxon>
        <taxon>Archaeoglobus</taxon>
    </lineage>
</organism>
<reference key="1">
    <citation type="journal article" date="1997" name="Nature">
        <title>The complete genome sequence of the hyperthermophilic, sulphate-reducing archaeon Archaeoglobus fulgidus.</title>
        <authorList>
            <person name="Klenk H.-P."/>
            <person name="Clayton R.A."/>
            <person name="Tomb J.-F."/>
            <person name="White O."/>
            <person name="Nelson K.E."/>
            <person name="Ketchum K.A."/>
            <person name="Dodson R.J."/>
            <person name="Gwinn M.L."/>
            <person name="Hickey E.K."/>
            <person name="Peterson J.D."/>
            <person name="Richardson D.L."/>
            <person name="Kerlavage A.R."/>
            <person name="Graham D.E."/>
            <person name="Kyrpides N.C."/>
            <person name="Fleischmann R.D."/>
            <person name="Quackenbush J."/>
            <person name="Lee N.H."/>
            <person name="Sutton G.G."/>
            <person name="Gill S.R."/>
            <person name="Kirkness E.F."/>
            <person name="Dougherty B.A."/>
            <person name="McKenney K."/>
            <person name="Adams M.D."/>
            <person name="Loftus B.J."/>
            <person name="Peterson S.N."/>
            <person name="Reich C.I."/>
            <person name="McNeil L.K."/>
            <person name="Badger J.H."/>
            <person name="Glodek A."/>
            <person name="Zhou L."/>
            <person name="Overbeek R."/>
            <person name="Gocayne J.D."/>
            <person name="Weidman J.F."/>
            <person name="McDonald L.A."/>
            <person name="Utterback T.R."/>
            <person name="Cotton M.D."/>
            <person name="Spriggs T."/>
            <person name="Artiach P."/>
            <person name="Kaine B.P."/>
            <person name="Sykes S.M."/>
            <person name="Sadow P.W."/>
            <person name="D'Andrea K.P."/>
            <person name="Bowman C."/>
            <person name="Fujii C."/>
            <person name="Garland S.A."/>
            <person name="Mason T.M."/>
            <person name="Olsen G.J."/>
            <person name="Fraser C.M."/>
            <person name="Smith H.O."/>
            <person name="Woese C.R."/>
            <person name="Venter J.C."/>
        </authorList>
    </citation>
    <scope>NUCLEOTIDE SEQUENCE [LARGE SCALE GENOMIC DNA]</scope>
    <source>
        <strain>ATCC 49558 / DSM 4304 / JCM 9628 / NBRC 100126 / VC-16</strain>
    </source>
</reference>
<accession>O30075</accession>
<gene>
    <name type="ordered locus">AF_0162</name>
</gene>
<feature type="chain" id="PRO_0000127843" description="Uncharacterized protein AF_0162">
    <location>
        <begin position="1"/>
        <end position="116"/>
    </location>
</feature>
<dbReference type="EMBL" id="AE000782">
    <property type="protein sequence ID" value="AAB91074.1"/>
    <property type="molecule type" value="Genomic_DNA"/>
</dbReference>
<dbReference type="PIR" id="B69270">
    <property type="entry name" value="B69270"/>
</dbReference>
<dbReference type="RefSeq" id="WP_010877674.1">
    <property type="nucleotide sequence ID" value="NC_000917.1"/>
</dbReference>
<dbReference type="STRING" id="224325.AF_0162"/>
<dbReference type="PaxDb" id="224325-AF_0162"/>
<dbReference type="EnsemblBacteria" id="AAB91074">
    <property type="protein sequence ID" value="AAB91074"/>
    <property type="gene ID" value="AF_0162"/>
</dbReference>
<dbReference type="KEGG" id="afu:AF_0162"/>
<dbReference type="eggNOG" id="arCOG00710">
    <property type="taxonomic scope" value="Archaea"/>
</dbReference>
<dbReference type="HOGENOM" id="CLU_2091170_0_0_2"/>
<dbReference type="OrthoDB" id="3017at2231"/>
<dbReference type="Proteomes" id="UP000002199">
    <property type="component" value="Chromosome"/>
</dbReference>